<dbReference type="EMBL" id="AY607041">
    <property type="protein sequence ID" value="AAU08751.1"/>
    <property type="molecule type" value="Genomic_DNA"/>
</dbReference>
<dbReference type="RefSeq" id="YP_007626627.1">
    <property type="nucleotide sequence ID" value="NC_020743.1"/>
</dbReference>
<dbReference type="SMR" id="Q5UVI3"/>
<dbReference type="GeneID" id="14842503"/>
<dbReference type="CTD" id="4519"/>
<dbReference type="GO" id="GO:0005743">
    <property type="term" value="C:mitochondrial inner membrane"/>
    <property type="evidence" value="ECO:0007669"/>
    <property type="project" value="UniProtKB-SubCell"/>
</dbReference>
<dbReference type="GO" id="GO:0045275">
    <property type="term" value="C:respiratory chain complex III"/>
    <property type="evidence" value="ECO:0007669"/>
    <property type="project" value="InterPro"/>
</dbReference>
<dbReference type="GO" id="GO:0046872">
    <property type="term" value="F:metal ion binding"/>
    <property type="evidence" value="ECO:0007669"/>
    <property type="project" value="UniProtKB-KW"/>
</dbReference>
<dbReference type="GO" id="GO:0008121">
    <property type="term" value="F:ubiquinol-cytochrome-c reductase activity"/>
    <property type="evidence" value="ECO:0007669"/>
    <property type="project" value="InterPro"/>
</dbReference>
<dbReference type="GO" id="GO:0006122">
    <property type="term" value="P:mitochondrial electron transport, ubiquinol to cytochrome c"/>
    <property type="evidence" value="ECO:0007669"/>
    <property type="project" value="TreeGrafter"/>
</dbReference>
<dbReference type="CDD" id="cd00290">
    <property type="entry name" value="cytochrome_b_C"/>
    <property type="match status" value="1"/>
</dbReference>
<dbReference type="CDD" id="cd00284">
    <property type="entry name" value="Cytochrome_b_N"/>
    <property type="match status" value="1"/>
</dbReference>
<dbReference type="FunFam" id="1.20.810.10:FF:000002">
    <property type="entry name" value="Cytochrome b"/>
    <property type="match status" value="1"/>
</dbReference>
<dbReference type="Gene3D" id="1.20.810.10">
    <property type="entry name" value="Cytochrome Bc1 Complex, Chain C"/>
    <property type="match status" value="1"/>
</dbReference>
<dbReference type="InterPro" id="IPR005798">
    <property type="entry name" value="Cyt_b/b6_C"/>
</dbReference>
<dbReference type="InterPro" id="IPR036150">
    <property type="entry name" value="Cyt_b/b6_C_sf"/>
</dbReference>
<dbReference type="InterPro" id="IPR005797">
    <property type="entry name" value="Cyt_b/b6_N"/>
</dbReference>
<dbReference type="InterPro" id="IPR027387">
    <property type="entry name" value="Cytb/b6-like_sf"/>
</dbReference>
<dbReference type="InterPro" id="IPR030689">
    <property type="entry name" value="Cytochrome_b"/>
</dbReference>
<dbReference type="InterPro" id="IPR048260">
    <property type="entry name" value="Cytochrome_b_C_euk/bac"/>
</dbReference>
<dbReference type="InterPro" id="IPR048259">
    <property type="entry name" value="Cytochrome_b_N_euk/bac"/>
</dbReference>
<dbReference type="InterPro" id="IPR016174">
    <property type="entry name" value="Di-haem_cyt_TM"/>
</dbReference>
<dbReference type="PANTHER" id="PTHR19271">
    <property type="entry name" value="CYTOCHROME B"/>
    <property type="match status" value="1"/>
</dbReference>
<dbReference type="PANTHER" id="PTHR19271:SF16">
    <property type="entry name" value="CYTOCHROME B"/>
    <property type="match status" value="1"/>
</dbReference>
<dbReference type="Pfam" id="PF00032">
    <property type="entry name" value="Cytochrom_B_C"/>
    <property type="match status" value="1"/>
</dbReference>
<dbReference type="Pfam" id="PF00033">
    <property type="entry name" value="Cytochrome_B"/>
    <property type="match status" value="1"/>
</dbReference>
<dbReference type="PIRSF" id="PIRSF038885">
    <property type="entry name" value="COB"/>
    <property type="match status" value="1"/>
</dbReference>
<dbReference type="SUPFAM" id="SSF81648">
    <property type="entry name" value="a domain/subunit of cytochrome bc1 complex (Ubiquinol-cytochrome c reductase)"/>
    <property type="match status" value="1"/>
</dbReference>
<dbReference type="SUPFAM" id="SSF81342">
    <property type="entry name" value="Transmembrane di-heme cytochromes"/>
    <property type="match status" value="1"/>
</dbReference>
<dbReference type="PROSITE" id="PS51003">
    <property type="entry name" value="CYTB_CTER"/>
    <property type="match status" value="1"/>
</dbReference>
<dbReference type="PROSITE" id="PS51002">
    <property type="entry name" value="CYTB_NTER"/>
    <property type="match status" value="1"/>
</dbReference>
<feature type="chain" id="PRO_0000060758" description="Cytochrome b">
    <location>
        <begin position="1"/>
        <end position="379"/>
    </location>
</feature>
<feature type="transmembrane region" description="Helical" evidence="2">
    <location>
        <begin position="33"/>
        <end position="53"/>
    </location>
</feature>
<feature type="transmembrane region" description="Helical" evidence="2">
    <location>
        <begin position="77"/>
        <end position="98"/>
    </location>
</feature>
<feature type="transmembrane region" description="Helical" evidence="2">
    <location>
        <begin position="113"/>
        <end position="133"/>
    </location>
</feature>
<feature type="transmembrane region" description="Helical" evidence="2">
    <location>
        <begin position="178"/>
        <end position="198"/>
    </location>
</feature>
<feature type="transmembrane region" description="Helical" evidence="2">
    <location>
        <begin position="226"/>
        <end position="246"/>
    </location>
</feature>
<feature type="transmembrane region" description="Helical" evidence="2">
    <location>
        <begin position="288"/>
        <end position="308"/>
    </location>
</feature>
<feature type="transmembrane region" description="Helical" evidence="2">
    <location>
        <begin position="320"/>
        <end position="340"/>
    </location>
</feature>
<feature type="transmembrane region" description="Helical" evidence="2">
    <location>
        <begin position="347"/>
        <end position="367"/>
    </location>
</feature>
<feature type="binding site" description="axial binding residue" evidence="2">
    <location>
        <position position="83"/>
    </location>
    <ligand>
        <name>heme b</name>
        <dbReference type="ChEBI" id="CHEBI:60344"/>
        <label>b562</label>
    </ligand>
    <ligandPart>
        <name>Fe</name>
        <dbReference type="ChEBI" id="CHEBI:18248"/>
    </ligandPart>
</feature>
<feature type="binding site" description="axial binding residue" evidence="2">
    <location>
        <position position="97"/>
    </location>
    <ligand>
        <name>heme b</name>
        <dbReference type="ChEBI" id="CHEBI:60344"/>
        <label>b566</label>
    </ligand>
    <ligandPart>
        <name>Fe</name>
        <dbReference type="ChEBI" id="CHEBI:18248"/>
    </ligandPart>
</feature>
<feature type="binding site" description="axial binding residue" evidence="2">
    <location>
        <position position="182"/>
    </location>
    <ligand>
        <name>heme b</name>
        <dbReference type="ChEBI" id="CHEBI:60344"/>
        <label>b562</label>
    </ligand>
    <ligandPart>
        <name>Fe</name>
        <dbReference type="ChEBI" id="CHEBI:18248"/>
    </ligandPart>
</feature>
<feature type="binding site" description="axial binding residue" evidence="2">
    <location>
        <position position="196"/>
    </location>
    <ligand>
        <name>heme b</name>
        <dbReference type="ChEBI" id="CHEBI:60344"/>
        <label>b566</label>
    </ligand>
    <ligandPart>
        <name>Fe</name>
        <dbReference type="ChEBI" id="CHEBI:18248"/>
    </ligandPart>
</feature>
<feature type="binding site" evidence="2">
    <location>
        <position position="201"/>
    </location>
    <ligand>
        <name>a ubiquinone</name>
        <dbReference type="ChEBI" id="CHEBI:16389"/>
    </ligand>
</feature>
<comment type="function">
    <text evidence="2">Component of the ubiquinol-cytochrome c reductase complex (complex III or cytochrome b-c1 complex) that is part of the mitochondrial respiratory chain. The b-c1 complex mediates electron transfer from ubiquinol to cytochrome c. Contributes to the generation of a proton gradient across the mitochondrial membrane that is then used for ATP synthesis.</text>
</comment>
<comment type="cofactor">
    <cofactor evidence="2">
        <name>heme b</name>
        <dbReference type="ChEBI" id="CHEBI:60344"/>
    </cofactor>
    <text evidence="2">Binds 2 heme b groups non-covalently.</text>
</comment>
<comment type="subunit">
    <text evidence="2">The cytochrome bc1 complex contains 11 subunits: 3 respiratory subunits (MT-CYB, CYC1 and UQCRFS1), 2 core proteins (UQCRC1 and UQCRC2) and 6 low-molecular weight proteins (UQCRH/QCR6, UQCRB/QCR7, UQCRQ/QCR8, UQCR10/QCR9, UQCR11/QCR10 and a cleavage product of UQCRFS1). This cytochrome bc1 complex then forms a dimer.</text>
</comment>
<comment type="subcellular location">
    <subcellularLocation>
        <location evidence="2">Mitochondrion inner membrane</location>
        <topology evidence="2">Multi-pass membrane protein</topology>
    </subcellularLocation>
</comment>
<comment type="miscellaneous">
    <text evidence="1">Heme 1 (or BL or b562) is low-potential and absorbs at about 562 nm, and heme 2 (or BH or b566) is high-potential and absorbs at about 566 nm.</text>
</comment>
<comment type="similarity">
    <text evidence="3 4">Belongs to the cytochrome b family.</text>
</comment>
<comment type="caution">
    <text evidence="2">The full-length protein contains only eight transmembrane helices, not nine as predicted by bioinformatics tools.</text>
</comment>
<reference key="1">
    <citation type="journal article" date="2004" name="Mol. Phylogenet. Evol.">
        <title>Evolution and phylogeny of old world deer.</title>
        <authorList>
            <person name="Pitra C."/>
            <person name="Fickel J."/>
            <person name="Meijaard E."/>
            <person name="Groves P.C."/>
        </authorList>
    </citation>
    <scope>NUCLEOTIDE SEQUENCE [GENOMIC DNA]</scope>
</reference>
<geneLocation type="mitochondrion"/>
<proteinExistence type="inferred from homology"/>
<name>CYB_RUCDU</name>
<gene>
    <name type="primary">MT-CYB</name>
    <name type="synonym">COB</name>
    <name type="synonym">CYTB</name>
    <name type="synonym">MTCYB</name>
</gene>
<evidence type="ECO:0000250" key="1"/>
<evidence type="ECO:0000250" key="2">
    <source>
        <dbReference type="UniProtKB" id="P00157"/>
    </source>
</evidence>
<evidence type="ECO:0000255" key="3">
    <source>
        <dbReference type="PROSITE-ProRule" id="PRU00967"/>
    </source>
</evidence>
<evidence type="ECO:0000255" key="4">
    <source>
        <dbReference type="PROSITE-ProRule" id="PRU00968"/>
    </source>
</evidence>
<accession>Q5UVI3</accession>
<protein>
    <recommendedName>
        <fullName>Cytochrome b</fullName>
    </recommendedName>
    <alternativeName>
        <fullName>Complex III subunit 3</fullName>
    </alternativeName>
    <alternativeName>
        <fullName>Complex III subunit III</fullName>
    </alternativeName>
    <alternativeName>
        <fullName>Cytochrome b-c1 complex subunit 3</fullName>
    </alternativeName>
    <alternativeName>
        <fullName>Ubiquinol-cytochrome-c reductase complex cytochrome b subunit</fullName>
    </alternativeName>
</protein>
<organism>
    <name type="scientific">Rucervus duvaucelii</name>
    <name type="common">Swamp deer</name>
    <name type="synonym">Cervus duvaucelii</name>
    <dbReference type="NCBI Taxonomy" id="43328"/>
    <lineage>
        <taxon>Eukaryota</taxon>
        <taxon>Metazoa</taxon>
        <taxon>Chordata</taxon>
        <taxon>Craniata</taxon>
        <taxon>Vertebrata</taxon>
        <taxon>Euteleostomi</taxon>
        <taxon>Mammalia</taxon>
        <taxon>Eutheria</taxon>
        <taxon>Laurasiatheria</taxon>
        <taxon>Artiodactyla</taxon>
        <taxon>Ruminantia</taxon>
        <taxon>Pecora</taxon>
        <taxon>Cervidae</taxon>
        <taxon>Cervinae</taxon>
        <taxon>Rucervus</taxon>
    </lineage>
</organism>
<keyword id="KW-0249">Electron transport</keyword>
<keyword id="KW-0349">Heme</keyword>
<keyword id="KW-0408">Iron</keyword>
<keyword id="KW-0472">Membrane</keyword>
<keyword id="KW-0479">Metal-binding</keyword>
<keyword id="KW-0496">Mitochondrion</keyword>
<keyword id="KW-0999">Mitochondrion inner membrane</keyword>
<keyword id="KW-0679">Respiratory chain</keyword>
<keyword id="KW-0812">Transmembrane</keyword>
<keyword id="KW-1133">Transmembrane helix</keyword>
<keyword id="KW-0813">Transport</keyword>
<keyword id="KW-0830">Ubiquinone</keyword>
<sequence>MINIRKTHPLMKIVNNAFIDLPAPSNISSWWNFGSLLGICLILQILTGLFLAMHYTSDTMTAFSSVTHICRDVNYGWIIRYMHANGASMFFICLFMHVGRGLYYGSYTFLETWNIGVILLFTVMATAFVGYVLPWGQMSFWGATVITNLLSAIPYIGTNLVEWIWGGFSVDKATLTRFFAFHFILPFIIAALAMVHLLFLHETGSNNPTGIPSDADKIPFHPYYTIKDILGILLLILFLMLLVLFAPDLLGDPDNYTPANPLNTPPHIKPEWYFLFAYAILRSIPNKLGGVLALVSSILILILMPLLHTSKQRSMMFRPFSQCLFWVLVADLLTLTWIGGQPVEYPFIIIGQLASILYFFIILVLMPITSTIENNLLKW</sequence>